<reference key="1">
    <citation type="submission" date="2008-04" db="EMBL/GenBank/DDBJ databases">
        <title>Complete sequence of Yersinia pseudotuberculosis PB1/+.</title>
        <authorList>
            <person name="Copeland A."/>
            <person name="Lucas S."/>
            <person name="Lapidus A."/>
            <person name="Glavina del Rio T."/>
            <person name="Dalin E."/>
            <person name="Tice H."/>
            <person name="Bruce D."/>
            <person name="Goodwin L."/>
            <person name="Pitluck S."/>
            <person name="Munk A.C."/>
            <person name="Brettin T."/>
            <person name="Detter J.C."/>
            <person name="Han C."/>
            <person name="Tapia R."/>
            <person name="Schmutz J."/>
            <person name="Larimer F."/>
            <person name="Land M."/>
            <person name="Hauser L."/>
            <person name="Challacombe J.F."/>
            <person name="Green L."/>
            <person name="Lindler L.E."/>
            <person name="Nikolich M.P."/>
            <person name="Richardson P."/>
        </authorList>
    </citation>
    <scope>NUCLEOTIDE SEQUENCE [LARGE SCALE GENOMIC DNA]</scope>
    <source>
        <strain>PB1/+</strain>
    </source>
</reference>
<evidence type="ECO:0000255" key="1">
    <source>
        <dbReference type="HAMAP-Rule" id="MF_01014"/>
    </source>
</evidence>
<organism>
    <name type="scientific">Yersinia pseudotuberculosis serotype IB (strain PB1/+)</name>
    <dbReference type="NCBI Taxonomy" id="502801"/>
    <lineage>
        <taxon>Bacteria</taxon>
        <taxon>Pseudomonadati</taxon>
        <taxon>Pseudomonadota</taxon>
        <taxon>Gammaproteobacteria</taxon>
        <taxon>Enterobacterales</taxon>
        <taxon>Yersiniaceae</taxon>
        <taxon>Yersinia</taxon>
    </lineage>
</organism>
<accession>B2JZM5</accession>
<sequence>MIIPALDLIEGKVVRLHQGDYGQQRDYGNHPLPRLQDYQQQGAQVLHLVDLTGAKDPAARQIPLLRELLAGVDVPVQVGGGIRNEQDVVALLEAGAARVVVGSTAVKQPEMVQQWFERYGAEAIVLALDVRINEAGCKHVAISGWQENSDATLEQIVEQYLPYGLKHVLCTDISRDGTLSGSNVELYQEVCQRYPQVAFQASGGIGCLDDIARLRGSGVQGVIVGRALLDGKFNVKEAIACWQNV</sequence>
<feature type="chain" id="PRO_1000190574" description="1-(5-phosphoribosyl)-5-[(5-phosphoribosylamino)methylideneamino] imidazole-4-carboxamide isomerase">
    <location>
        <begin position="1"/>
        <end position="245"/>
    </location>
</feature>
<feature type="active site" description="Proton acceptor" evidence="1">
    <location>
        <position position="7"/>
    </location>
</feature>
<feature type="active site" description="Proton donor" evidence="1">
    <location>
        <position position="129"/>
    </location>
</feature>
<keyword id="KW-0028">Amino-acid biosynthesis</keyword>
<keyword id="KW-0963">Cytoplasm</keyword>
<keyword id="KW-0368">Histidine biosynthesis</keyword>
<keyword id="KW-0413">Isomerase</keyword>
<comment type="catalytic activity">
    <reaction evidence="1">
        <text>1-(5-phospho-beta-D-ribosyl)-5-[(5-phospho-beta-D-ribosylamino)methylideneamino]imidazole-4-carboxamide = 5-[(5-phospho-1-deoxy-D-ribulos-1-ylimino)methylamino]-1-(5-phospho-beta-D-ribosyl)imidazole-4-carboxamide</text>
        <dbReference type="Rhea" id="RHEA:15469"/>
        <dbReference type="ChEBI" id="CHEBI:58435"/>
        <dbReference type="ChEBI" id="CHEBI:58525"/>
        <dbReference type="EC" id="5.3.1.16"/>
    </reaction>
</comment>
<comment type="pathway">
    <text evidence="1">Amino-acid biosynthesis; L-histidine biosynthesis; L-histidine from 5-phospho-alpha-D-ribose 1-diphosphate: step 4/9.</text>
</comment>
<comment type="subcellular location">
    <subcellularLocation>
        <location evidence="1">Cytoplasm</location>
    </subcellularLocation>
</comment>
<comment type="similarity">
    <text evidence="1">Belongs to the HisA/HisF family.</text>
</comment>
<name>HIS4_YERPB</name>
<protein>
    <recommendedName>
        <fullName evidence="1">1-(5-phosphoribosyl)-5-[(5-phosphoribosylamino)methylideneamino] imidazole-4-carboxamide isomerase</fullName>
        <ecNumber evidence="1">5.3.1.16</ecNumber>
    </recommendedName>
    <alternativeName>
        <fullName evidence="1">Phosphoribosylformimino-5-aminoimidazole carboxamide ribotide isomerase</fullName>
    </alternativeName>
</protein>
<gene>
    <name evidence="1" type="primary">hisA</name>
    <name type="ordered locus">YPTS_1666</name>
</gene>
<dbReference type="EC" id="5.3.1.16" evidence="1"/>
<dbReference type="EMBL" id="CP001048">
    <property type="protein sequence ID" value="ACC88635.1"/>
    <property type="molecule type" value="Genomic_DNA"/>
</dbReference>
<dbReference type="RefSeq" id="WP_002211891.1">
    <property type="nucleotide sequence ID" value="NZ_CP009780.1"/>
</dbReference>
<dbReference type="SMR" id="B2JZM5"/>
<dbReference type="GeneID" id="96665163"/>
<dbReference type="KEGG" id="ypb:YPTS_1666"/>
<dbReference type="PATRIC" id="fig|502801.10.peg.1037"/>
<dbReference type="UniPathway" id="UPA00031">
    <property type="reaction ID" value="UER00009"/>
</dbReference>
<dbReference type="GO" id="GO:0005737">
    <property type="term" value="C:cytoplasm"/>
    <property type="evidence" value="ECO:0007669"/>
    <property type="project" value="UniProtKB-SubCell"/>
</dbReference>
<dbReference type="GO" id="GO:0003949">
    <property type="term" value="F:1-(5-phosphoribosyl)-5-[(5-phosphoribosylamino)methylideneamino]imidazole-4-carboxamide isomerase activity"/>
    <property type="evidence" value="ECO:0007669"/>
    <property type="project" value="UniProtKB-UniRule"/>
</dbReference>
<dbReference type="GO" id="GO:0000105">
    <property type="term" value="P:L-histidine biosynthetic process"/>
    <property type="evidence" value="ECO:0007669"/>
    <property type="project" value="UniProtKB-UniRule"/>
</dbReference>
<dbReference type="GO" id="GO:0000162">
    <property type="term" value="P:L-tryptophan biosynthetic process"/>
    <property type="evidence" value="ECO:0007669"/>
    <property type="project" value="TreeGrafter"/>
</dbReference>
<dbReference type="CDD" id="cd04732">
    <property type="entry name" value="HisA"/>
    <property type="match status" value="1"/>
</dbReference>
<dbReference type="FunFam" id="3.20.20.70:FF:000009">
    <property type="entry name" value="1-(5-phosphoribosyl)-5-[(5-phosphoribosylamino)methylideneamino] imidazole-4-carboxamide isomerase"/>
    <property type="match status" value="1"/>
</dbReference>
<dbReference type="Gene3D" id="3.20.20.70">
    <property type="entry name" value="Aldolase class I"/>
    <property type="match status" value="1"/>
</dbReference>
<dbReference type="HAMAP" id="MF_01014">
    <property type="entry name" value="HisA"/>
    <property type="match status" value="1"/>
</dbReference>
<dbReference type="InterPro" id="IPR013785">
    <property type="entry name" value="Aldolase_TIM"/>
</dbReference>
<dbReference type="InterPro" id="IPR006062">
    <property type="entry name" value="His_biosynth"/>
</dbReference>
<dbReference type="InterPro" id="IPR006063">
    <property type="entry name" value="HisA_bact_arch"/>
</dbReference>
<dbReference type="InterPro" id="IPR044524">
    <property type="entry name" value="Isoase_HisA-like"/>
</dbReference>
<dbReference type="InterPro" id="IPR023016">
    <property type="entry name" value="Isoase_HisA-like_bact"/>
</dbReference>
<dbReference type="InterPro" id="IPR011060">
    <property type="entry name" value="RibuloseP-bd_barrel"/>
</dbReference>
<dbReference type="NCBIfam" id="TIGR00007">
    <property type="entry name" value="1-(5-phosphoribosyl)-5-[(5-phosphoribosylamino)methylideneamino]imidazole-4-carboxamide isomerase"/>
    <property type="match status" value="1"/>
</dbReference>
<dbReference type="PANTHER" id="PTHR43090">
    <property type="entry name" value="1-(5-PHOSPHORIBOSYL)-5-[(5-PHOSPHORIBOSYLAMINO)METHYLIDENEAMINO] IMIDAZOLE-4-CARBOXAMIDE ISOMERASE"/>
    <property type="match status" value="1"/>
</dbReference>
<dbReference type="PANTHER" id="PTHR43090:SF2">
    <property type="entry name" value="1-(5-PHOSPHORIBOSYL)-5-[(5-PHOSPHORIBOSYLAMINO)METHYLIDENEAMINO] IMIDAZOLE-4-CARBOXAMIDE ISOMERASE"/>
    <property type="match status" value="1"/>
</dbReference>
<dbReference type="Pfam" id="PF00977">
    <property type="entry name" value="His_biosynth"/>
    <property type="match status" value="1"/>
</dbReference>
<dbReference type="SUPFAM" id="SSF51366">
    <property type="entry name" value="Ribulose-phoshate binding barrel"/>
    <property type="match status" value="1"/>
</dbReference>
<proteinExistence type="inferred from homology"/>